<accession>O00472</accession>
<accession>B4DNK7</accession>
<evidence type="ECO:0000255" key="1">
    <source>
        <dbReference type="PROSITE-ProRule" id="PRU01324"/>
    </source>
</evidence>
<evidence type="ECO:0000256" key="2">
    <source>
        <dbReference type="SAM" id="MobiDB-lite"/>
    </source>
</evidence>
<evidence type="ECO:0000269" key="3">
    <source>
    </source>
</evidence>
<evidence type="ECO:0000269" key="4">
    <source>
    </source>
</evidence>
<evidence type="ECO:0000269" key="5">
    <source>
    </source>
</evidence>
<evidence type="ECO:0000269" key="6">
    <source>
    </source>
</evidence>
<evidence type="ECO:0000269" key="7">
    <source>
    </source>
</evidence>
<evidence type="ECO:0000269" key="8">
    <source>
    </source>
</evidence>
<evidence type="ECO:0000269" key="9">
    <source>
    </source>
</evidence>
<evidence type="ECO:0000269" key="10">
    <source>
    </source>
</evidence>
<evidence type="ECO:0000269" key="11">
    <source>
    </source>
</evidence>
<evidence type="ECO:0000303" key="12">
    <source>
    </source>
</evidence>
<evidence type="ECO:0000305" key="13"/>
<evidence type="ECO:0007744" key="14">
    <source>
    </source>
</evidence>
<evidence type="ECO:0007744" key="15">
    <source>
    </source>
</evidence>
<evidence type="ECO:0007744" key="16">
    <source>
    </source>
</evidence>
<evidence type="ECO:0007829" key="17">
    <source>
        <dbReference type="PDB" id="2E5N"/>
    </source>
</evidence>
<evidence type="ECO:0007829" key="18">
    <source>
        <dbReference type="PDB" id="5JW9"/>
    </source>
</evidence>
<evidence type="ECO:0007829" key="19">
    <source>
        <dbReference type="PDB" id="7OKX"/>
    </source>
</evidence>
<feature type="chain" id="PRO_0000146735" description="RNA polymerase II elongation factor ELL2">
    <location>
        <begin position="1"/>
        <end position="640"/>
    </location>
</feature>
<feature type="domain" description="OCEL" evidence="1">
    <location>
        <begin position="526"/>
        <end position="636"/>
    </location>
</feature>
<feature type="region of interest" description="Disordered" evidence="2">
    <location>
        <begin position="172"/>
        <end position="202"/>
    </location>
</feature>
<feature type="region of interest" description="Disordered" evidence="2">
    <location>
        <begin position="290"/>
        <end position="320"/>
    </location>
</feature>
<feature type="region of interest" description="Disordered" evidence="2">
    <location>
        <begin position="343"/>
        <end position="490"/>
    </location>
</feature>
<feature type="compositionally biased region" description="Polar residues" evidence="2">
    <location>
        <begin position="184"/>
        <end position="202"/>
    </location>
</feature>
<feature type="compositionally biased region" description="Polar residues" evidence="2">
    <location>
        <begin position="291"/>
        <end position="318"/>
    </location>
</feature>
<feature type="compositionally biased region" description="Low complexity" evidence="2">
    <location>
        <begin position="360"/>
        <end position="372"/>
    </location>
</feature>
<feature type="compositionally biased region" description="Polar residues" evidence="2">
    <location>
        <begin position="391"/>
        <end position="401"/>
    </location>
</feature>
<feature type="compositionally biased region" description="Basic residues" evidence="2">
    <location>
        <begin position="457"/>
        <end position="470"/>
    </location>
</feature>
<feature type="compositionally biased region" description="Basic and acidic residues" evidence="2">
    <location>
        <begin position="471"/>
        <end position="490"/>
    </location>
</feature>
<feature type="modified residue" description="Phosphoserine" evidence="15 16">
    <location>
        <position position="503"/>
    </location>
</feature>
<feature type="modified residue" description="Phosphoserine" evidence="14">
    <location>
        <position position="580"/>
    </location>
</feature>
<feature type="splice variant" id="VSP_055476" description="In isoform 2." evidence="12">
    <location>
        <begin position="140"/>
        <end position="389"/>
    </location>
</feature>
<feature type="sequence variant" id="VAR_058406" description="In dbSNP:rs3815768." evidence="5 11">
    <original>A</original>
    <variation>T</variation>
    <location>
        <position position="298"/>
    </location>
</feature>
<feature type="strand" evidence="19">
    <location>
        <begin position="27"/>
        <end position="33"/>
    </location>
</feature>
<feature type="helix" evidence="19">
    <location>
        <begin position="36"/>
        <end position="47"/>
    </location>
</feature>
<feature type="turn" evidence="19">
    <location>
        <begin position="48"/>
        <end position="51"/>
    </location>
</feature>
<feature type="strand" evidence="19">
    <location>
        <begin position="64"/>
        <end position="68"/>
    </location>
</feature>
<feature type="strand" evidence="19">
    <location>
        <begin position="81"/>
        <end position="86"/>
    </location>
</feature>
<feature type="turn" evidence="19">
    <location>
        <begin position="89"/>
        <end position="91"/>
    </location>
</feature>
<feature type="strand" evidence="19">
    <location>
        <begin position="93"/>
        <end position="102"/>
    </location>
</feature>
<feature type="strand" evidence="19">
    <location>
        <begin position="112"/>
        <end position="117"/>
    </location>
</feature>
<feature type="strand" evidence="19">
    <location>
        <begin position="121"/>
        <end position="124"/>
    </location>
</feature>
<feature type="helix" evidence="19">
    <location>
        <begin position="128"/>
        <end position="145"/>
    </location>
</feature>
<feature type="helix" evidence="17">
    <location>
        <begin position="206"/>
        <end position="216"/>
    </location>
</feature>
<feature type="helix" evidence="17">
    <location>
        <begin position="221"/>
        <end position="231"/>
    </location>
</feature>
<feature type="helix" evidence="17">
    <location>
        <begin position="235"/>
        <end position="248"/>
    </location>
</feature>
<feature type="strand" evidence="17">
    <location>
        <begin position="249"/>
        <end position="252"/>
    </location>
</feature>
<feature type="turn" evidence="17">
    <location>
        <begin position="253"/>
        <end position="256"/>
    </location>
</feature>
<feature type="strand" evidence="17">
    <location>
        <begin position="257"/>
        <end position="260"/>
    </location>
</feature>
<feature type="helix" evidence="17">
    <location>
        <begin position="264"/>
        <end position="267"/>
    </location>
</feature>
<feature type="helix" evidence="17">
    <location>
        <begin position="279"/>
        <end position="290"/>
    </location>
</feature>
<feature type="helix" evidence="18">
    <location>
        <begin position="527"/>
        <end position="531"/>
    </location>
</feature>
<feature type="helix" evidence="18">
    <location>
        <begin position="538"/>
        <end position="578"/>
    </location>
</feature>
<feature type="helix" evidence="18">
    <location>
        <begin position="584"/>
        <end position="602"/>
    </location>
</feature>
<feature type="helix" evidence="18">
    <location>
        <begin position="607"/>
        <end position="636"/>
    </location>
</feature>
<protein>
    <recommendedName>
        <fullName>RNA polymerase II elongation factor ELL2</fullName>
    </recommendedName>
</protein>
<gene>
    <name type="primary">ELL2</name>
</gene>
<organism>
    <name type="scientific">Homo sapiens</name>
    <name type="common">Human</name>
    <dbReference type="NCBI Taxonomy" id="9606"/>
    <lineage>
        <taxon>Eukaryota</taxon>
        <taxon>Metazoa</taxon>
        <taxon>Chordata</taxon>
        <taxon>Craniata</taxon>
        <taxon>Vertebrata</taxon>
        <taxon>Euteleostomi</taxon>
        <taxon>Mammalia</taxon>
        <taxon>Eutheria</taxon>
        <taxon>Euarchontoglires</taxon>
        <taxon>Primates</taxon>
        <taxon>Haplorrhini</taxon>
        <taxon>Catarrhini</taxon>
        <taxon>Hominidae</taxon>
        <taxon>Homo</taxon>
    </lineage>
</organism>
<reference key="1">
    <citation type="journal article" date="1997" name="Proc. Natl. Acad. Sci. U.S.A.">
        <title>ELL2, a new member of an ELL family of RNA polymerase II elongation factors.</title>
        <authorList>
            <person name="Shilatifard A."/>
            <person name="Duan D.R."/>
            <person name="Haque D."/>
            <person name="Florence C."/>
            <person name="Schubach W.H."/>
            <person name="Conaway J.W."/>
            <person name="Conaway R.C."/>
        </authorList>
    </citation>
    <scope>NUCLEOTIDE SEQUENCE [GENOMIC DNA]</scope>
    <scope>VARIANT THR-298</scope>
</reference>
<reference key="2">
    <citation type="journal article" date="2004" name="Nat. Genet.">
        <title>Complete sequencing and characterization of 21,243 full-length human cDNAs.</title>
        <authorList>
            <person name="Ota T."/>
            <person name="Suzuki Y."/>
            <person name="Nishikawa T."/>
            <person name="Otsuki T."/>
            <person name="Sugiyama T."/>
            <person name="Irie R."/>
            <person name="Wakamatsu A."/>
            <person name="Hayashi K."/>
            <person name="Sato H."/>
            <person name="Nagai K."/>
            <person name="Kimura K."/>
            <person name="Makita H."/>
            <person name="Sekine M."/>
            <person name="Obayashi M."/>
            <person name="Nishi T."/>
            <person name="Shibahara T."/>
            <person name="Tanaka T."/>
            <person name="Ishii S."/>
            <person name="Yamamoto J."/>
            <person name="Saito K."/>
            <person name="Kawai Y."/>
            <person name="Isono Y."/>
            <person name="Nakamura Y."/>
            <person name="Nagahari K."/>
            <person name="Murakami K."/>
            <person name="Yasuda T."/>
            <person name="Iwayanagi T."/>
            <person name="Wagatsuma M."/>
            <person name="Shiratori A."/>
            <person name="Sudo H."/>
            <person name="Hosoiri T."/>
            <person name="Kaku Y."/>
            <person name="Kodaira H."/>
            <person name="Kondo H."/>
            <person name="Sugawara M."/>
            <person name="Takahashi M."/>
            <person name="Kanda K."/>
            <person name="Yokoi T."/>
            <person name="Furuya T."/>
            <person name="Kikkawa E."/>
            <person name="Omura Y."/>
            <person name="Abe K."/>
            <person name="Kamihara K."/>
            <person name="Katsuta N."/>
            <person name="Sato K."/>
            <person name="Tanikawa M."/>
            <person name="Yamazaki M."/>
            <person name="Ninomiya K."/>
            <person name="Ishibashi T."/>
            <person name="Yamashita H."/>
            <person name="Murakawa K."/>
            <person name="Fujimori K."/>
            <person name="Tanai H."/>
            <person name="Kimata M."/>
            <person name="Watanabe M."/>
            <person name="Hiraoka S."/>
            <person name="Chiba Y."/>
            <person name="Ishida S."/>
            <person name="Ono Y."/>
            <person name="Takiguchi S."/>
            <person name="Watanabe S."/>
            <person name="Yosida M."/>
            <person name="Hotuta T."/>
            <person name="Kusano J."/>
            <person name="Kanehori K."/>
            <person name="Takahashi-Fujii A."/>
            <person name="Hara H."/>
            <person name="Tanase T.-O."/>
            <person name="Nomura Y."/>
            <person name="Togiya S."/>
            <person name="Komai F."/>
            <person name="Hara R."/>
            <person name="Takeuchi K."/>
            <person name="Arita M."/>
            <person name="Imose N."/>
            <person name="Musashino K."/>
            <person name="Yuuki H."/>
            <person name="Oshima A."/>
            <person name="Sasaki N."/>
            <person name="Aotsuka S."/>
            <person name="Yoshikawa Y."/>
            <person name="Matsunawa H."/>
            <person name="Ichihara T."/>
            <person name="Shiohata N."/>
            <person name="Sano S."/>
            <person name="Moriya S."/>
            <person name="Momiyama H."/>
            <person name="Satoh N."/>
            <person name="Takami S."/>
            <person name="Terashima Y."/>
            <person name="Suzuki O."/>
            <person name="Nakagawa S."/>
            <person name="Senoh A."/>
            <person name="Mizoguchi H."/>
            <person name="Goto Y."/>
            <person name="Shimizu F."/>
            <person name="Wakebe H."/>
            <person name="Hishigaki H."/>
            <person name="Watanabe T."/>
            <person name="Sugiyama A."/>
            <person name="Takemoto M."/>
            <person name="Kawakami B."/>
            <person name="Yamazaki M."/>
            <person name="Watanabe K."/>
            <person name="Kumagai A."/>
            <person name="Itakura S."/>
            <person name="Fukuzumi Y."/>
            <person name="Fujimori Y."/>
            <person name="Komiyama M."/>
            <person name="Tashiro H."/>
            <person name="Tanigami A."/>
            <person name="Fujiwara T."/>
            <person name="Ono T."/>
            <person name="Yamada K."/>
            <person name="Fujii Y."/>
            <person name="Ozaki K."/>
            <person name="Hirao M."/>
            <person name="Ohmori Y."/>
            <person name="Kawabata A."/>
            <person name="Hikiji T."/>
            <person name="Kobatake N."/>
            <person name="Inagaki H."/>
            <person name="Ikema Y."/>
            <person name="Okamoto S."/>
            <person name="Okitani R."/>
            <person name="Kawakami T."/>
            <person name="Noguchi S."/>
            <person name="Itoh T."/>
            <person name="Shigeta K."/>
            <person name="Senba T."/>
            <person name="Matsumura K."/>
            <person name="Nakajima Y."/>
            <person name="Mizuno T."/>
            <person name="Morinaga M."/>
            <person name="Sasaki M."/>
            <person name="Togashi T."/>
            <person name="Oyama M."/>
            <person name="Hata H."/>
            <person name="Watanabe M."/>
            <person name="Komatsu T."/>
            <person name="Mizushima-Sugano J."/>
            <person name="Satoh T."/>
            <person name="Shirai Y."/>
            <person name="Takahashi Y."/>
            <person name="Nakagawa K."/>
            <person name="Okumura K."/>
            <person name="Nagase T."/>
            <person name="Nomura N."/>
            <person name="Kikuchi H."/>
            <person name="Masuho Y."/>
            <person name="Yamashita R."/>
            <person name="Nakai K."/>
            <person name="Yada T."/>
            <person name="Nakamura Y."/>
            <person name="Ohara O."/>
            <person name="Isogai T."/>
            <person name="Sugano S."/>
        </authorList>
    </citation>
    <scope>NUCLEOTIDE SEQUENCE [LARGE SCALE MRNA] (ISOFORM 2)</scope>
</reference>
<reference key="3">
    <citation type="journal article" date="2004" name="Nature">
        <title>The DNA sequence and comparative analysis of human chromosome 5.</title>
        <authorList>
            <person name="Schmutz J."/>
            <person name="Martin J."/>
            <person name="Terry A."/>
            <person name="Couronne O."/>
            <person name="Grimwood J."/>
            <person name="Lowry S."/>
            <person name="Gordon L.A."/>
            <person name="Scott D."/>
            <person name="Xie G."/>
            <person name="Huang W."/>
            <person name="Hellsten U."/>
            <person name="Tran-Gyamfi M."/>
            <person name="She X."/>
            <person name="Prabhakar S."/>
            <person name="Aerts A."/>
            <person name="Altherr M."/>
            <person name="Bajorek E."/>
            <person name="Black S."/>
            <person name="Branscomb E."/>
            <person name="Caoile C."/>
            <person name="Challacombe J.F."/>
            <person name="Chan Y.M."/>
            <person name="Denys M."/>
            <person name="Detter J.C."/>
            <person name="Escobar J."/>
            <person name="Flowers D."/>
            <person name="Fotopulos D."/>
            <person name="Glavina T."/>
            <person name="Gomez M."/>
            <person name="Gonzales E."/>
            <person name="Goodstein D."/>
            <person name="Grigoriev I."/>
            <person name="Groza M."/>
            <person name="Hammon N."/>
            <person name="Hawkins T."/>
            <person name="Haydu L."/>
            <person name="Israni S."/>
            <person name="Jett J."/>
            <person name="Kadner K."/>
            <person name="Kimball H."/>
            <person name="Kobayashi A."/>
            <person name="Lopez F."/>
            <person name="Lou Y."/>
            <person name="Martinez D."/>
            <person name="Medina C."/>
            <person name="Morgan J."/>
            <person name="Nandkeshwar R."/>
            <person name="Noonan J.P."/>
            <person name="Pitluck S."/>
            <person name="Pollard M."/>
            <person name="Predki P."/>
            <person name="Priest J."/>
            <person name="Ramirez L."/>
            <person name="Retterer J."/>
            <person name="Rodriguez A."/>
            <person name="Rogers S."/>
            <person name="Salamov A."/>
            <person name="Salazar A."/>
            <person name="Thayer N."/>
            <person name="Tice H."/>
            <person name="Tsai M."/>
            <person name="Ustaszewska A."/>
            <person name="Vo N."/>
            <person name="Wheeler J."/>
            <person name="Wu K."/>
            <person name="Yang J."/>
            <person name="Dickson M."/>
            <person name="Cheng J.-F."/>
            <person name="Eichler E.E."/>
            <person name="Olsen A."/>
            <person name="Pennacchio L.A."/>
            <person name="Rokhsar D.S."/>
            <person name="Richardson P."/>
            <person name="Lucas S.M."/>
            <person name="Myers R.M."/>
            <person name="Rubin E.M."/>
        </authorList>
    </citation>
    <scope>NUCLEOTIDE SEQUENCE [LARGE SCALE GENOMIC DNA]</scope>
</reference>
<reference key="4">
    <citation type="journal article" date="2004" name="Genome Res.">
        <title>The status, quality, and expansion of the NIH full-length cDNA project: the Mammalian Gene Collection (MGC).</title>
        <authorList>
            <consortium name="The MGC Project Team"/>
        </authorList>
    </citation>
    <scope>NUCLEOTIDE SEQUENCE [LARGE SCALE MRNA] (ISOFORM 1)</scope>
    <scope>VARIANT THR-298</scope>
    <source>
        <tissue>Testis</tissue>
    </source>
</reference>
<reference key="5">
    <citation type="journal article" date="2001" name="Blood">
        <title>EAF1, a novel ELL-associated factor that is delocalized by expression of the MLL-ELL fusion protein.</title>
        <authorList>
            <person name="Simone F."/>
            <person name="Polak P.E."/>
            <person name="Kaberlein J.J."/>
            <person name="Luo R.T."/>
            <person name="Levitan D.A."/>
            <person name="Thirman M.J."/>
        </authorList>
    </citation>
    <scope>INTERACTION WITH EAF1</scope>
</reference>
<reference key="6">
    <citation type="journal article" date="2003" name="Blood">
        <title>ELL-associated factor 2 (EAF2), a functional homolog of EAF1 with alternative ELL binding properties.</title>
        <authorList>
            <person name="Simone F."/>
            <person name="Luo R.T."/>
            <person name="Polak P.E."/>
            <person name="Kaberlein J.J."/>
            <person name="Thirman M.J."/>
        </authorList>
    </citation>
    <scope>INTERACTION WITH EAF2</scope>
</reference>
<reference key="7">
    <citation type="journal article" date="2008" name="Mol. Cell">
        <title>Kinase-selective enrichment enables quantitative phosphoproteomics of the kinome across the cell cycle.</title>
        <authorList>
            <person name="Daub H."/>
            <person name="Olsen J.V."/>
            <person name="Bairlein M."/>
            <person name="Gnad F."/>
            <person name="Oppermann F.S."/>
            <person name="Korner R."/>
            <person name="Greff Z."/>
            <person name="Keri G."/>
            <person name="Stemmann O."/>
            <person name="Mann M."/>
        </authorList>
    </citation>
    <scope>PHOSPHORYLATION [LARGE SCALE ANALYSIS] AT SER-580</scope>
    <scope>IDENTIFICATION BY MASS SPECTROMETRY [LARGE SCALE ANALYSIS]</scope>
    <source>
        <tissue>Cervix carcinoma</tissue>
    </source>
</reference>
<reference key="8">
    <citation type="journal article" date="2008" name="Proc. Natl. Acad. Sci. U.S.A.">
        <title>A quantitative atlas of mitotic phosphorylation.</title>
        <authorList>
            <person name="Dephoure N."/>
            <person name="Zhou C."/>
            <person name="Villen J."/>
            <person name="Beausoleil S.A."/>
            <person name="Bakalarski C.E."/>
            <person name="Elledge S.J."/>
            <person name="Gygi S.P."/>
        </authorList>
    </citation>
    <scope>IDENTIFICATION BY MASS SPECTROMETRY [LARGE SCALE ANALYSIS]</scope>
    <source>
        <tissue>Cervix carcinoma</tissue>
    </source>
</reference>
<reference key="9">
    <citation type="journal article" date="2010" name="Mol. Cell">
        <title>HIV-1 Tat and host AFF4 recruit two transcription elongation factors into a bifunctional complex for coordinated activation of HIV-1 transcription.</title>
        <authorList>
            <person name="He N."/>
            <person name="Liu M."/>
            <person name="Hsu J."/>
            <person name="Xue Y."/>
            <person name="Chou S."/>
            <person name="Burlingame A."/>
            <person name="Krogan N.J."/>
            <person name="Alber T."/>
            <person name="Zhou Q."/>
        </authorList>
    </citation>
    <scope>FUNCTION</scope>
    <scope>IDENTIFICATION IN THE SEC COMPLEX</scope>
</reference>
<reference key="10">
    <citation type="journal article" date="2010" name="Mol. Cell">
        <title>AFF4, a component of the ELL/P-TEFb elongation complex and a shared subunit of MLL chimeras, can link transcription elongation to leukemia.</title>
        <authorList>
            <person name="Lin C."/>
            <person name="Smith E.R."/>
            <person name="Takahashi H."/>
            <person name="Lai K.C."/>
            <person name="Martin-Brown S."/>
            <person name="Florens L."/>
            <person name="Washburn M.P."/>
            <person name="Conaway J.W."/>
            <person name="Conaway R.C."/>
            <person name="Shilatifard A."/>
        </authorList>
    </citation>
    <scope>FUNCTION</scope>
    <scope>IDENTIFICATION IN THE SEC COMPLEX</scope>
</reference>
<reference key="11">
    <citation type="journal article" date="2010" name="Sci. Signal.">
        <title>Quantitative phosphoproteomics reveals widespread full phosphorylation site occupancy during mitosis.</title>
        <authorList>
            <person name="Olsen J.V."/>
            <person name="Vermeulen M."/>
            <person name="Santamaria A."/>
            <person name="Kumar C."/>
            <person name="Miller M.L."/>
            <person name="Jensen L.J."/>
            <person name="Gnad F."/>
            <person name="Cox J."/>
            <person name="Jensen T.S."/>
            <person name="Nigg E.A."/>
            <person name="Brunak S."/>
            <person name="Mann M."/>
        </authorList>
    </citation>
    <scope>PHOSPHORYLATION [LARGE SCALE ANALYSIS] AT SER-503</scope>
    <scope>IDENTIFICATION BY MASS SPECTROMETRY [LARGE SCALE ANALYSIS]</scope>
    <source>
        <tissue>Cervix carcinoma</tissue>
    </source>
</reference>
<reference key="12">
    <citation type="journal article" date="2011" name="Mol. Cell">
        <title>The little elongation complex regulates small nuclear RNA transcription.</title>
        <authorList>
            <person name="Smith E.R."/>
            <person name="Lin C."/>
            <person name="Garrett A.S."/>
            <person name="Thornton J."/>
            <person name="Mohaghegh N."/>
            <person name="Hu D."/>
            <person name="Jackson J."/>
            <person name="Saraf A."/>
            <person name="Swanson S.K."/>
            <person name="Seidel C."/>
            <person name="Florens L."/>
            <person name="Washburn M.P."/>
            <person name="Eissenberg J.C."/>
            <person name="Shilatifard A."/>
        </authorList>
    </citation>
    <scope>FUNCTION</scope>
    <scope>IDENTIFICATION IN THE SEC COMPLEX</scope>
    <scope>IDENTIFICATION IN THE LEC COMPLEX</scope>
</reference>
<reference key="13">
    <citation type="journal article" date="2011" name="Sci. Signal.">
        <title>System-wide temporal characterization of the proteome and phosphoproteome of human embryonic stem cell differentiation.</title>
        <authorList>
            <person name="Rigbolt K.T."/>
            <person name="Prokhorova T.A."/>
            <person name="Akimov V."/>
            <person name="Henningsen J."/>
            <person name="Johansen P.T."/>
            <person name="Kratchmarova I."/>
            <person name="Kassem M."/>
            <person name="Mann M."/>
            <person name="Olsen J.V."/>
            <person name="Blagoev B."/>
        </authorList>
    </citation>
    <scope>PHOSPHORYLATION [LARGE SCALE ANALYSIS] AT SER-503</scope>
    <scope>IDENTIFICATION BY MASS SPECTROMETRY [LARGE SCALE ANALYSIS]</scope>
</reference>
<reference key="14">
    <citation type="journal article" date="2012" name="Mol. Cell">
        <title>The ubiquitin ligase Siah1 controls ELL2 stability and formation of super elongation complexes to modulate gene transcription.</title>
        <authorList>
            <person name="Liu M."/>
            <person name="Hsu J."/>
            <person name="Chan C."/>
            <person name="Li Z."/>
            <person name="Zhou Q."/>
        </authorList>
    </citation>
    <scope>UBIQUITINATION</scope>
</reference>
<reference key="15">
    <citation type="journal article" date="2012" name="Nat. Rev. Mol. Cell Biol.">
        <title>The super elongation complex (SEC) family in transcriptional control.</title>
        <authorList>
            <person name="Luo Z."/>
            <person name="Lin C."/>
            <person name="Shilatifard A."/>
        </authorList>
    </citation>
    <scope>REVIEW ON THE SUPER ELONGATION COMPLEX</scope>
</reference>
<reference key="16">
    <citation type="journal article" date="2013" name="Proc. Natl. Acad. Sci. U.S.A.">
        <title>HIV-1 Tat recruits transcription elongation factors dispersed along a flexible AFF4 scaffold.</title>
        <authorList>
            <person name="Chou S."/>
            <person name="Upton H."/>
            <person name="Bao K."/>
            <person name="Schulze-Gahmen U."/>
            <person name="Samelson A.J."/>
            <person name="He N."/>
            <person name="Nowak A."/>
            <person name="Lu H."/>
            <person name="Krogan N.J."/>
            <person name="Zhou Q."/>
            <person name="Alber T."/>
        </authorList>
    </citation>
    <scope>FUNCTION</scope>
</reference>
<reference key="17">
    <citation type="submission" date="2007-06" db="PDB data bank">
        <title>Solution structure of the ELL_N2 domain of target of RNA polymerase II elongation factor ELL2.</title>
        <authorList>
            <consortium name="RIKEN structural genomics initiative (RSGI)"/>
        </authorList>
    </citation>
    <scope>STRUCTURE BY NMR OF 197-292</scope>
</reference>
<proteinExistence type="evidence at protein level"/>
<sequence>MAAGGTGGLREEQRYGLSCGRLGQDNITVLHVKLTETAIRALETYQSHKNLIPFRPSIQFQGLHGLVKIPKNDPLNEVHNFNFYLSNVGKDNPQGSFDCIQQTFSSSGASQLNCLGFIQDKITVCATNDSYQMTRERMTQAEEESRNRSTKVIKPGGPYVGKRVQIRKAPQAVSDTVPERKRSTPMNPANTIRKTHSSSTISQRPYRDRVIHLLALKAYKKPELLARLQKDGVNQKDKNSLGAILQQVANLNSKDLSYTLKDYVFKELQRDWPGYSEIDRRSLESVLSRKLNPSQNAAGTSRSESPVCSSRDAVSSPQKRLLDSEFIDPLMNKKARISHLTNRVPPTLNGHLNPTSEKSAAGLPLPPAAAAIPTPPPLPSTYLPISHPPQIVNSNSNSPSTPEGRGTQDLPVDSFSQNDSIYEDQQDKYTSRTSLETLPPGSVLLKCPKPMEENHSMSHKKSKKKSKKHKEKDQIKKHDIETIEEKEEDLKREEEIAKLNNSSPNSSGGVKEDCTASMEPSAIELPDYLIKYIAIVSYEQRQNYKDDFNAEYDEYRALHARMETVARRFIKLDAQRKRLSPGSKEYQNVHEEVLQEYQKIKQSSPNYHEEKYRCEYLHNKLAHIKRLIGEFDQQQAESWS</sequence>
<keyword id="KW-0002">3D-structure</keyword>
<keyword id="KW-0025">Alternative splicing</keyword>
<keyword id="KW-0539">Nucleus</keyword>
<keyword id="KW-0597">Phosphoprotein</keyword>
<keyword id="KW-1267">Proteomics identification</keyword>
<keyword id="KW-1185">Reference proteome</keyword>
<keyword id="KW-0804">Transcription</keyword>
<keyword id="KW-0805">Transcription regulation</keyword>
<keyword id="KW-0832">Ubl conjugation</keyword>
<dbReference type="EMBL" id="U88629">
    <property type="protein sequence ID" value="AAC51232.1"/>
    <property type="molecule type" value="Genomic_DNA"/>
</dbReference>
<dbReference type="EMBL" id="AK297956">
    <property type="protein sequence ID" value="BAG60269.1"/>
    <property type="molecule type" value="mRNA"/>
</dbReference>
<dbReference type="EMBL" id="AC008592">
    <property type="status" value="NOT_ANNOTATED_CDS"/>
    <property type="molecule type" value="Genomic_DNA"/>
</dbReference>
<dbReference type="EMBL" id="BC028412">
    <property type="protein sequence ID" value="AAH28412.1"/>
    <property type="molecule type" value="mRNA"/>
</dbReference>
<dbReference type="CCDS" id="CCDS4080.1">
    <molecule id="O00472-1"/>
</dbReference>
<dbReference type="RefSeq" id="NP_036213.2">
    <molecule id="O00472-1"/>
    <property type="nucleotide sequence ID" value="NM_012081.6"/>
</dbReference>
<dbReference type="PDB" id="2E5N">
    <property type="method" value="NMR"/>
    <property type="chains" value="A=200-292"/>
</dbReference>
<dbReference type="PDB" id="5JW9">
    <property type="method" value="X-ray"/>
    <property type="resolution" value="2.00 A"/>
    <property type="chains" value="B=519-640"/>
</dbReference>
<dbReference type="PDB" id="7OKX">
    <property type="method" value="EM"/>
    <property type="resolution" value="3.30 A"/>
    <property type="chains" value="M=1-640"/>
</dbReference>
<dbReference type="PDB" id="7OKY">
    <property type="method" value="EM"/>
    <property type="resolution" value="4.14 A"/>
    <property type="chains" value="M=1-640"/>
</dbReference>
<dbReference type="PDBsum" id="2E5N"/>
<dbReference type="PDBsum" id="5JW9"/>
<dbReference type="PDBsum" id="7OKX"/>
<dbReference type="PDBsum" id="7OKY"/>
<dbReference type="EMDB" id="EMD-12966"/>
<dbReference type="EMDB" id="EMD-12967"/>
<dbReference type="EMDB" id="EMD-12968"/>
<dbReference type="EMDB" id="EMD-12969"/>
<dbReference type="EMDB" id="EMD-12970"/>
<dbReference type="EMDB" id="EMD-12971"/>
<dbReference type="EMDB" id="EMD-12972"/>
<dbReference type="EMDB" id="EMD-12973"/>
<dbReference type="SMR" id="O00472"/>
<dbReference type="BioGRID" id="116595">
    <property type="interactions" value="36"/>
</dbReference>
<dbReference type="ComplexPortal" id="CPX-2713">
    <property type="entry name" value="Little elongation complex, ELL2 variant"/>
</dbReference>
<dbReference type="CORUM" id="O00472"/>
<dbReference type="FunCoup" id="O00472">
    <property type="interactions" value="2157"/>
</dbReference>
<dbReference type="IntAct" id="O00472">
    <property type="interactions" value="51"/>
</dbReference>
<dbReference type="STRING" id="9606.ENSP00000237853"/>
<dbReference type="GlyConnect" id="1720">
    <property type="glycosylation" value="4 N-Linked glycans (1 site)"/>
</dbReference>
<dbReference type="GlyCosmos" id="O00472">
    <property type="glycosylation" value="1 site, 3 glycans"/>
</dbReference>
<dbReference type="GlyGen" id="O00472">
    <property type="glycosylation" value="1 site, 3 N-linked glycans (1 site)"/>
</dbReference>
<dbReference type="iPTMnet" id="O00472"/>
<dbReference type="PhosphoSitePlus" id="O00472"/>
<dbReference type="BioMuta" id="ELL2"/>
<dbReference type="jPOST" id="O00472"/>
<dbReference type="MassIVE" id="O00472"/>
<dbReference type="PaxDb" id="9606-ENSP00000237853"/>
<dbReference type="PeptideAtlas" id="O00472"/>
<dbReference type="ProteomicsDB" id="4705"/>
<dbReference type="ProteomicsDB" id="47920">
    <molecule id="O00472-1"/>
</dbReference>
<dbReference type="Pumba" id="O00472"/>
<dbReference type="Antibodypedia" id="13079">
    <property type="antibodies" value="175 antibodies from 30 providers"/>
</dbReference>
<dbReference type="DNASU" id="22936"/>
<dbReference type="Ensembl" id="ENST00000237853.9">
    <molecule id="O00472-1"/>
    <property type="protein sequence ID" value="ENSP00000237853.4"/>
    <property type="gene ID" value="ENSG00000118985.16"/>
</dbReference>
<dbReference type="GeneID" id="22936"/>
<dbReference type="KEGG" id="hsa:22936"/>
<dbReference type="MANE-Select" id="ENST00000237853.9">
    <property type="protein sequence ID" value="ENSP00000237853.4"/>
    <property type="RefSeq nucleotide sequence ID" value="NM_012081.6"/>
    <property type="RefSeq protein sequence ID" value="NP_036213.2"/>
</dbReference>
<dbReference type="UCSC" id="uc003klr.4">
    <molecule id="O00472-1"/>
    <property type="organism name" value="human"/>
</dbReference>
<dbReference type="AGR" id="HGNC:17064"/>
<dbReference type="CTD" id="22936"/>
<dbReference type="DisGeNET" id="22936"/>
<dbReference type="GeneCards" id="ELL2"/>
<dbReference type="HGNC" id="HGNC:17064">
    <property type="gene designation" value="ELL2"/>
</dbReference>
<dbReference type="HPA" id="ENSG00000118985">
    <property type="expression patterns" value="Low tissue specificity"/>
</dbReference>
<dbReference type="MIM" id="601874">
    <property type="type" value="gene"/>
</dbReference>
<dbReference type="neXtProt" id="NX_O00472"/>
<dbReference type="OpenTargets" id="ENSG00000118985"/>
<dbReference type="PharmGKB" id="PA134935340"/>
<dbReference type="VEuPathDB" id="HostDB:ENSG00000118985"/>
<dbReference type="eggNOG" id="KOG4796">
    <property type="taxonomic scope" value="Eukaryota"/>
</dbReference>
<dbReference type="GeneTree" id="ENSGT00940000154828"/>
<dbReference type="HOGENOM" id="CLU_021268_0_0_1"/>
<dbReference type="InParanoid" id="O00472"/>
<dbReference type="OMA" id="PNYYEEK"/>
<dbReference type="OrthoDB" id="6284217at2759"/>
<dbReference type="PAN-GO" id="O00472">
    <property type="GO annotations" value="4 GO annotations based on evolutionary models"/>
</dbReference>
<dbReference type="PhylomeDB" id="O00472"/>
<dbReference type="TreeFam" id="TF326161"/>
<dbReference type="PathwayCommons" id="O00472"/>
<dbReference type="Reactome" id="R-HSA-6807505">
    <property type="pathway name" value="RNA polymerase II transcribes snRNA genes"/>
</dbReference>
<dbReference type="SignaLink" id="O00472"/>
<dbReference type="BioGRID-ORCS" id="22936">
    <property type="hits" value="22 hits in 1158 CRISPR screens"/>
</dbReference>
<dbReference type="ChiTaRS" id="ELL2">
    <property type="organism name" value="human"/>
</dbReference>
<dbReference type="EvolutionaryTrace" id="O00472"/>
<dbReference type="GenomeRNAi" id="22936"/>
<dbReference type="Pharos" id="O00472">
    <property type="development level" value="Tbio"/>
</dbReference>
<dbReference type="PRO" id="PR:O00472"/>
<dbReference type="Proteomes" id="UP000005640">
    <property type="component" value="Chromosome 5"/>
</dbReference>
<dbReference type="RNAct" id="O00472">
    <property type="molecule type" value="protein"/>
</dbReference>
<dbReference type="Bgee" id="ENSG00000118985">
    <property type="expression patterns" value="Expressed in parotid gland and 190 other cell types or tissues"/>
</dbReference>
<dbReference type="ExpressionAtlas" id="O00472">
    <property type="expression patterns" value="baseline and differential"/>
</dbReference>
<dbReference type="GO" id="GO:0005654">
    <property type="term" value="C:nucleoplasm"/>
    <property type="evidence" value="ECO:0000314"/>
    <property type="project" value="HPA"/>
</dbReference>
<dbReference type="GO" id="GO:0008023">
    <property type="term" value="C:transcription elongation factor complex"/>
    <property type="evidence" value="ECO:0000314"/>
    <property type="project" value="UniProtKB"/>
</dbReference>
<dbReference type="GO" id="GO:0000987">
    <property type="term" value="F:cis-regulatory region sequence-specific DNA binding"/>
    <property type="evidence" value="ECO:0000318"/>
    <property type="project" value="GO_Central"/>
</dbReference>
<dbReference type="GO" id="GO:0032968">
    <property type="term" value="P:positive regulation of transcription elongation by RNA polymerase II"/>
    <property type="evidence" value="ECO:0000318"/>
    <property type="project" value="GO_Central"/>
</dbReference>
<dbReference type="GO" id="GO:0042795">
    <property type="term" value="P:snRNA transcription by RNA polymerase II"/>
    <property type="evidence" value="ECO:0000315"/>
    <property type="project" value="UniProtKB"/>
</dbReference>
<dbReference type="GO" id="GO:0006368">
    <property type="term" value="P:transcription elongation by RNA polymerase II"/>
    <property type="evidence" value="ECO:0000304"/>
    <property type="project" value="ProtInc"/>
</dbReference>
<dbReference type="FunFam" id="1.10.10.2670:FF:000002">
    <property type="entry name" value="RNA polymerase II elongation factor ELL2"/>
    <property type="match status" value="1"/>
</dbReference>
<dbReference type="Gene3D" id="6.10.140.340">
    <property type="match status" value="1"/>
</dbReference>
<dbReference type="Gene3D" id="1.10.10.2670">
    <property type="entry name" value="E3 ubiquitin-protein ligase"/>
    <property type="match status" value="1"/>
</dbReference>
<dbReference type="InterPro" id="IPR042065">
    <property type="entry name" value="E3_ELL-like"/>
</dbReference>
<dbReference type="InterPro" id="IPR031176">
    <property type="entry name" value="ELL/occludin"/>
</dbReference>
<dbReference type="InterPro" id="IPR019464">
    <property type="entry name" value="ELL_N"/>
</dbReference>
<dbReference type="InterPro" id="IPR010844">
    <property type="entry name" value="Occludin_ELL"/>
</dbReference>
<dbReference type="InterPro" id="IPR036390">
    <property type="entry name" value="WH_DNA-bd_sf"/>
</dbReference>
<dbReference type="PANTHER" id="PTHR23288">
    <property type="entry name" value="OCCLUDIN AND RNA POLYMERASE II ELONGATION FACTOR ELL"/>
    <property type="match status" value="1"/>
</dbReference>
<dbReference type="PANTHER" id="PTHR23288:SF8">
    <property type="entry name" value="RNA POLYMERASE II ELONGATION FACTOR ELL2"/>
    <property type="match status" value="1"/>
</dbReference>
<dbReference type="Pfam" id="PF10390">
    <property type="entry name" value="ELL"/>
    <property type="match status" value="1"/>
</dbReference>
<dbReference type="Pfam" id="PF07303">
    <property type="entry name" value="Occludin_ELL"/>
    <property type="match status" value="1"/>
</dbReference>
<dbReference type="SUPFAM" id="SSF144292">
    <property type="entry name" value="occludin/ELL-like"/>
    <property type="match status" value="1"/>
</dbReference>
<dbReference type="SUPFAM" id="SSF46785">
    <property type="entry name" value="Winged helix' DNA-binding domain"/>
    <property type="match status" value="1"/>
</dbReference>
<dbReference type="PROSITE" id="PS51980">
    <property type="entry name" value="OCEL"/>
    <property type="match status" value="1"/>
</dbReference>
<comment type="function">
    <text evidence="6 7 8 10">Elongation factor component of the super elongation complex (SEC), a complex required to increase the catalytic rate of RNA polymerase II transcription by suppressing transient pausing by the polymerase at multiple sites along the DNA. Component of the little elongation complex (LEC), a complex required to regulate small nuclear RNA (snRNA) gene transcription by RNA polymerase II and III (PubMed:22195968). Plays a role in immunoglobulin secretion in plasma cells: directs efficient alternative mRNA processing, influencing both proximal poly(A) site choice and exon skipping, as well as immunoglobulin heavy chain (IgH) alternative processing. Probably acts by regulating histone modifications accompanying transition from membrane-specific to secretory IgH mRNA expression.</text>
</comment>
<comment type="subunit">
    <text evidence="3 4 6 7 8">Component of the super elongation complex (SEC), at least composed of EAF1, EAF2, CDK9, MLLT3/AF9, AFF (AFF1 or AFF4), the P-TEFb complex and ELL (ELL, ELL2 or ELL3). Component of the little elongation complex (LEC), at least composed of ELL (ELL, ELL2 or ELL3), ZC3H8, ICE1 and ICE2. Interacts with AFF4; the interaction is direct and leads to stabilize ELL2 and prevent ELL2 ubiquitination. Interacts with EAF1 and EAF2.</text>
</comment>
<comment type="interaction">
    <interactant intactId="EBI-395274">
        <id>O00472</id>
    </interactant>
    <interactant intactId="EBI-491169">
        <id>P07550</id>
        <label>ADRB2</label>
    </interactant>
    <organismsDiffer>false</organismsDiffer>
    <experiments>3</experiments>
</comment>
<comment type="interaction">
    <interactant intactId="EBI-395274">
        <id>O00472</id>
    </interactant>
    <interactant intactId="EBI-745478">
        <id>Q8TAX5</id>
        <label>AFF4</label>
    </interactant>
    <organismsDiffer>false</organismsDiffer>
    <experiments>3</experiments>
</comment>
<comment type="interaction">
    <interactant intactId="EBI-395274">
        <id>O00472</id>
    </interactant>
    <interactant intactId="EBI-21535880">
        <id>Q92870-2</id>
        <label>APBB2</label>
    </interactant>
    <organismsDiffer>false</organismsDiffer>
    <experiments>3</experiments>
</comment>
<comment type="interaction">
    <interactant intactId="EBI-395274">
        <id>O00472</id>
    </interactant>
    <interactant intactId="EBI-930964">
        <id>P54253</id>
        <label>ATXN1</label>
    </interactant>
    <organismsDiffer>false</organismsDiffer>
    <experiments>6</experiments>
</comment>
<comment type="interaction">
    <interactant intactId="EBI-395274">
        <id>O00472</id>
    </interactant>
    <interactant intactId="EBI-718729">
        <id>P55212</id>
        <label>CASP6</label>
    </interactant>
    <organismsDiffer>false</organismsDiffer>
    <experiments>3</experiments>
</comment>
<comment type="interaction">
    <interactant intactId="EBI-395274">
        <id>O00472</id>
    </interactant>
    <interactant intactId="EBI-25837549">
        <id>P28329-3</id>
        <label>CHAT</label>
    </interactant>
    <organismsDiffer>false</organismsDiffer>
    <experiments>3</experiments>
</comment>
<comment type="interaction">
    <interactant intactId="EBI-395274">
        <id>O00472</id>
    </interactant>
    <interactant intactId="EBI-769261">
        <id>Q96JC9</id>
        <label>EAF1</label>
    </interactant>
    <organismsDiffer>false</organismsDiffer>
    <experiments>9</experiments>
</comment>
<comment type="interaction">
    <interactant intactId="EBI-395274">
        <id>O00472</id>
    </interactant>
    <interactant intactId="EBI-742102">
        <id>Q8IYI6</id>
        <label>EXOC8</label>
    </interactant>
    <organismsDiffer>false</organismsDiffer>
    <experiments>3</experiments>
</comment>
<comment type="interaction">
    <interactant intactId="EBI-395274">
        <id>O00472</id>
    </interactant>
    <interactant intactId="EBI-348399">
        <id>P22607</id>
        <label>FGFR3</label>
    </interactant>
    <organismsDiffer>false</organismsDiffer>
    <experiments>3</experiments>
</comment>
<comment type="interaction">
    <interactant intactId="EBI-395274">
        <id>O00472</id>
    </interactant>
    <interactant intactId="EBI-9641086">
        <id>P21333-2</id>
        <label>FLNA</label>
    </interactant>
    <organismsDiffer>false</organismsDiffer>
    <experiments>3</experiments>
</comment>
<comment type="interaction">
    <interactant intactId="EBI-395274">
        <id>O00472</id>
    </interactant>
    <interactant intactId="EBI-8285963">
        <id>Q14957</id>
        <label>GRIN2C</label>
    </interactant>
    <organismsDiffer>false</organismsDiffer>
    <experiments>3</experiments>
</comment>
<comment type="interaction">
    <interactant intactId="EBI-395274">
        <id>O00472</id>
    </interactant>
    <interactant intactId="EBI-351506">
        <id>P06396</id>
        <label>GSN</label>
    </interactant>
    <organismsDiffer>false</organismsDiffer>
    <experiments>3</experiments>
</comment>
<comment type="interaction">
    <interactant intactId="EBI-395274">
        <id>O00472</id>
    </interactant>
    <interactant intactId="EBI-712096">
        <id>P30519</id>
        <label>HMOX2</label>
    </interactant>
    <organismsDiffer>false</organismsDiffer>
    <experiments>3</experiments>
</comment>
<comment type="interaction">
    <interactant intactId="EBI-395274">
        <id>O00472</id>
    </interactant>
    <interactant intactId="EBI-21591415">
        <id>P13473-2</id>
        <label>LAMP2</label>
    </interactant>
    <organismsDiffer>false</organismsDiffer>
    <experiments>3</experiments>
</comment>
<comment type="interaction">
    <interactant intactId="EBI-395274">
        <id>O00472</id>
    </interactant>
    <interactant intactId="EBI-473160">
        <id>Q8N2W9</id>
        <label>PIAS4</label>
    </interactant>
    <organismsDiffer>false</organismsDiffer>
    <experiments>3</experiments>
</comment>
<comment type="interaction">
    <interactant intactId="EBI-395274">
        <id>O00472</id>
    </interactant>
    <interactant intactId="EBI-1053424">
        <id>O43741</id>
        <label>PRKAB2</label>
    </interactant>
    <organismsDiffer>false</organismsDiffer>
    <experiments>3</experiments>
</comment>
<comment type="interaction">
    <interactant intactId="EBI-395274">
        <id>O00472</id>
    </interactant>
    <interactant intactId="EBI-5280197">
        <id>O75400-2</id>
        <label>PRPF40A</label>
    </interactant>
    <organismsDiffer>false</organismsDiffer>
    <experiments>3</experiments>
</comment>
<comment type="interaction">
    <interactant intactId="EBI-395274">
        <id>O00472</id>
    </interactant>
    <interactant intactId="EBI-2010251">
        <id>P49810</id>
        <label>PSEN2</label>
    </interactant>
    <organismsDiffer>false</organismsDiffer>
    <experiments>3</experiments>
</comment>
<comment type="interaction">
    <interactant intactId="EBI-395274">
        <id>O00472</id>
    </interactant>
    <interactant intactId="EBI-286642">
        <id>P62826</id>
        <label>RAN</label>
    </interactant>
    <organismsDiffer>false</organismsDiffer>
    <experiments>3</experiments>
</comment>
<comment type="interaction">
    <interactant intactId="EBI-395274">
        <id>O00472</id>
    </interactant>
    <interactant intactId="EBI-2623095">
        <id>Q9Y371</id>
        <label>SH3GLB1</label>
    </interactant>
    <organismsDiffer>false</organismsDiffer>
    <experiments>3</experiments>
</comment>
<comment type="interaction">
    <interactant intactId="EBI-395274">
        <id>O00472</id>
    </interactant>
    <interactant intactId="EBI-985879">
        <id>P37840</id>
        <label>SNCA</label>
    </interactant>
    <organismsDiffer>false</organismsDiffer>
    <experiments>3</experiments>
</comment>
<comment type="interaction">
    <interactant intactId="EBI-395274">
        <id>O00472</id>
    </interactant>
    <interactant intactId="EBI-741480">
        <id>Q9UMX0</id>
        <label>UBQLN1</label>
    </interactant>
    <organismsDiffer>false</organismsDiffer>
    <experiments>3</experiments>
</comment>
<comment type="subcellular location">
    <subcellularLocation>
        <location>Nucleus</location>
    </subcellularLocation>
</comment>
<comment type="alternative products">
    <event type="alternative splicing"/>
    <isoform>
        <id>O00472-1</id>
        <name>1</name>
        <sequence type="displayed"/>
    </isoform>
    <isoform>
        <id>O00472-2</id>
        <name>2</name>
        <sequence type="described" ref="VSP_055476"/>
    </isoform>
</comment>
<comment type="PTM">
    <text evidence="9">Ubiquitinated by SIAH1, leading to its degradation by the proteasome. Interaction with AFF4 stabilizes ELL2 and prevents ELL2 ubiquitination.</text>
</comment>
<comment type="similarity">
    <text evidence="13">Belongs to the ELL/occludin family.</text>
</comment>
<name>ELL2_HUMAN</name>